<feature type="chain" id="PRO_0000339443" description="Nuclear protein localization protein 4">
    <location>
        <begin position="1"/>
        <end position="693"/>
    </location>
</feature>
<feature type="domain" description="MPN" evidence="2">
    <location>
        <begin position="259"/>
        <end position="399"/>
    </location>
</feature>
<feature type="region of interest" description="Disordered" evidence="3">
    <location>
        <begin position="85"/>
        <end position="132"/>
    </location>
</feature>
<feature type="region of interest" description="Disordered" evidence="3">
    <location>
        <begin position="613"/>
        <end position="665"/>
    </location>
</feature>
<feature type="compositionally biased region" description="Polar residues" evidence="3">
    <location>
        <begin position="613"/>
        <end position="631"/>
    </location>
</feature>
<feature type="compositionally biased region" description="Low complexity" evidence="3">
    <location>
        <begin position="644"/>
        <end position="655"/>
    </location>
</feature>
<accession>P0CP30</accession>
<accession>Q55VJ9</accession>
<accession>Q5KKN9</accession>
<dbReference type="EMBL" id="AE017343">
    <property type="protein sequence ID" value="AAW42211.1"/>
    <property type="molecule type" value="Genomic_DNA"/>
</dbReference>
<dbReference type="RefSeq" id="XP_569518.1">
    <property type="nucleotide sequence ID" value="XM_569518.1"/>
</dbReference>
<dbReference type="SMR" id="P0CP30"/>
<dbReference type="FunCoup" id="P0CP30">
    <property type="interactions" value="711"/>
</dbReference>
<dbReference type="STRING" id="214684.P0CP30"/>
<dbReference type="PaxDb" id="214684-P0CP30"/>
<dbReference type="EnsemblFungi" id="AAW42211">
    <property type="protein sequence ID" value="AAW42211"/>
    <property type="gene ID" value="CNC02370"/>
</dbReference>
<dbReference type="GeneID" id="3256137"/>
<dbReference type="KEGG" id="cne:CNC02370"/>
<dbReference type="VEuPathDB" id="FungiDB:CNC02370"/>
<dbReference type="eggNOG" id="KOG2834">
    <property type="taxonomic scope" value="Eukaryota"/>
</dbReference>
<dbReference type="HOGENOM" id="CLU_017172_1_0_1"/>
<dbReference type="InParanoid" id="P0CP30"/>
<dbReference type="OMA" id="KWSRTGR"/>
<dbReference type="OrthoDB" id="10251089at2759"/>
<dbReference type="Proteomes" id="UP000002149">
    <property type="component" value="Chromosome 3"/>
</dbReference>
<dbReference type="GO" id="GO:0005789">
    <property type="term" value="C:endoplasmic reticulum membrane"/>
    <property type="evidence" value="ECO:0007669"/>
    <property type="project" value="UniProtKB-SubCell"/>
</dbReference>
<dbReference type="GO" id="GO:0031965">
    <property type="term" value="C:nuclear membrane"/>
    <property type="evidence" value="ECO:0007669"/>
    <property type="project" value="UniProtKB-SubCell"/>
</dbReference>
<dbReference type="GO" id="GO:0005634">
    <property type="term" value="C:nucleus"/>
    <property type="evidence" value="ECO:0000318"/>
    <property type="project" value="GO_Central"/>
</dbReference>
<dbReference type="GO" id="GO:0048471">
    <property type="term" value="C:perinuclear region of cytoplasm"/>
    <property type="evidence" value="ECO:0007669"/>
    <property type="project" value="UniProtKB-SubCell"/>
</dbReference>
<dbReference type="GO" id="GO:0043130">
    <property type="term" value="F:ubiquitin binding"/>
    <property type="evidence" value="ECO:0000318"/>
    <property type="project" value="GO_Central"/>
</dbReference>
<dbReference type="GO" id="GO:0031625">
    <property type="term" value="F:ubiquitin protein ligase binding"/>
    <property type="evidence" value="ECO:0000318"/>
    <property type="project" value="GO_Central"/>
</dbReference>
<dbReference type="GO" id="GO:0051028">
    <property type="term" value="P:mRNA transport"/>
    <property type="evidence" value="ECO:0007669"/>
    <property type="project" value="UniProtKB-KW"/>
</dbReference>
<dbReference type="GO" id="GO:0015031">
    <property type="term" value="P:protein transport"/>
    <property type="evidence" value="ECO:0007669"/>
    <property type="project" value="UniProtKB-KW"/>
</dbReference>
<dbReference type="GO" id="GO:0006511">
    <property type="term" value="P:ubiquitin-dependent protein catabolic process"/>
    <property type="evidence" value="ECO:0000318"/>
    <property type="project" value="GO_Central"/>
</dbReference>
<dbReference type="CDD" id="cd08061">
    <property type="entry name" value="MPN_NPL4"/>
    <property type="match status" value="1"/>
</dbReference>
<dbReference type="FunFam" id="3.10.20.90:FF:000243">
    <property type="entry name" value="Nuclear protein localization protein 4"/>
    <property type="match status" value="1"/>
</dbReference>
<dbReference type="Gene3D" id="3.10.20.90">
    <property type="entry name" value="Phosphatidylinositol 3-kinase Catalytic Subunit, Chain A, domain 1"/>
    <property type="match status" value="1"/>
</dbReference>
<dbReference type="InterPro" id="IPR037518">
    <property type="entry name" value="MPN"/>
</dbReference>
<dbReference type="InterPro" id="IPR016563">
    <property type="entry name" value="Npl4"/>
</dbReference>
<dbReference type="InterPro" id="IPR007717">
    <property type="entry name" value="NPL4_C"/>
</dbReference>
<dbReference type="InterPro" id="IPR007716">
    <property type="entry name" value="NPL4_Zn-bd_put"/>
</dbReference>
<dbReference type="PANTHER" id="PTHR12710">
    <property type="entry name" value="NUCLEAR PROTEIN LOCALIZATION 4"/>
    <property type="match status" value="1"/>
</dbReference>
<dbReference type="PANTHER" id="PTHR12710:SF0">
    <property type="entry name" value="NUCLEAR PROTEIN LOCALIZATION PROTEIN 4 HOMOLOG"/>
    <property type="match status" value="1"/>
</dbReference>
<dbReference type="Pfam" id="PF05021">
    <property type="entry name" value="NPL4"/>
    <property type="match status" value="1"/>
</dbReference>
<dbReference type="Pfam" id="PF05020">
    <property type="entry name" value="zf-NPL4"/>
    <property type="match status" value="1"/>
</dbReference>
<dbReference type="PIRSF" id="PIRSF010052">
    <property type="entry name" value="Polyub_prc_Npl4"/>
    <property type="match status" value="1"/>
</dbReference>
<dbReference type="PROSITE" id="PS50249">
    <property type="entry name" value="MPN"/>
    <property type="match status" value="1"/>
</dbReference>
<evidence type="ECO:0000250" key="1"/>
<evidence type="ECO:0000255" key="2">
    <source>
        <dbReference type="PROSITE-ProRule" id="PRU01182"/>
    </source>
</evidence>
<evidence type="ECO:0000256" key="3">
    <source>
        <dbReference type="SAM" id="MobiDB-lite"/>
    </source>
</evidence>
<evidence type="ECO:0000305" key="4"/>
<name>NPL4_CRYNJ</name>
<reference key="1">
    <citation type="journal article" date="2005" name="Science">
        <title>The genome of the basidiomycetous yeast and human pathogen Cryptococcus neoformans.</title>
        <authorList>
            <person name="Loftus B.J."/>
            <person name="Fung E."/>
            <person name="Roncaglia P."/>
            <person name="Rowley D."/>
            <person name="Amedeo P."/>
            <person name="Bruno D."/>
            <person name="Vamathevan J."/>
            <person name="Miranda M."/>
            <person name="Anderson I.J."/>
            <person name="Fraser J.A."/>
            <person name="Allen J.E."/>
            <person name="Bosdet I.E."/>
            <person name="Brent M.R."/>
            <person name="Chiu R."/>
            <person name="Doering T.L."/>
            <person name="Donlin M.J."/>
            <person name="D'Souza C.A."/>
            <person name="Fox D.S."/>
            <person name="Grinberg V."/>
            <person name="Fu J."/>
            <person name="Fukushima M."/>
            <person name="Haas B.J."/>
            <person name="Huang J.C."/>
            <person name="Janbon G."/>
            <person name="Jones S.J.M."/>
            <person name="Koo H.L."/>
            <person name="Krzywinski M.I."/>
            <person name="Kwon-Chung K.J."/>
            <person name="Lengeler K.B."/>
            <person name="Maiti R."/>
            <person name="Marra M.A."/>
            <person name="Marra R.E."/>
            <person name="Mathewson C.A."/>
            <person name="Mitchell T.G."/>
            <person name="Pertea M."/>
            <person name="Riggs F.R."/>
            <person name="Salzberg S.L."/>
            <person name="Schein J.E."/>
            <person name="Shvartsbeyn A."/>
            <person name="Shin H."/>
            <person name="Shumway M."/>
            <person name="Specht C.A."/>
            <person name="Suh B.B."/>
            <person name="Tenney A."/>
            <person name="Utterback T.R."/>
            <person name="Wickes B.L."/>
            <person name="Wortman J.R."/>
            <person name="Wye N.H."/>
            <person name="Kronstad J.W."/>
            <person name="Lodge J.K."/>
            <person name="Heitman J."/>
            <person name="Davis R.W."/>
            <person name="Fraser C.M."/>
            <person name="Hyman R.W."/>
        </authorList>
    </citation>
    <scope>NUCLEOTIDE SEQUENCE [LARGE SCALE GENOMIC DNA]</scope>
    <source>
        <strain>JEC21 / ATCC MYA-565</strain>
    </source>
</reference>
<organism>
    <name type="scientific">Cryptococcus neoformans var. neoformans serotype D (strain JEC21 / ATCC MYA-565)</name>
    <name type="common">Filobasidiella neoformans</name>
    <dbReference type="NCBI Taxonomy" id="214684"/>
    <lineage>
        <taxon>Eukaryota</taxon>
        <taxon>Fungi</taxon>
        <taxon>Dikarya</taxon>
        <taxon>Basidiomycota</taxon>
        <taxon>Agaricomycotina</taxon>
        <taxon>Tremellomycetes</taxon>
        <taxon>Tremellales</taxon>
        <taxon>Cryptococcaceae</taxon>
        <taxon>Cryptococcus</taxon>
        <taxon>Cryptococcus neoformans species complex</taxon>
    </lineage>
</organism>
<sequence length="693" mass="75103">MLLRIRSPAGTARLTVQPETTGEDFAEAILNTIPAADPQPDPATLALSNQPGAAGESVPFHALSGRTVGDMGFSHGDLLFLSYKPRAADPDSHPAMQATAPHPQPAQPDPSHPKTHTDPPMPNTIPLRDLSSVQEPEIDQYWEKQTGKIERKRDPAFCRHGDKAMCDYCMPLEPYDPKFQSEHQIKHLSYHAYLRKLLSSRPPTASSATDLPPLSPTSLSVITPCPTGAHPSFPDGICSTCQPSAVTLQSQPFRMVDHIEFASPSIIEGLLSAWRRTGTQRIAFLIGREDKYEKVPMGIKVIVEAVWEPKQEGELDGLTVETPWSDESRVQEIAKWCDKGLSVVGMIYTDLTPSPDDITKTLYKRHAQSYTASSLEMLLSAAYQLSHPLSTRMSPTGHYSSRFVTCCLTGDKDGGVDILAWQASEHAEAMVKAGIVEASVDPAVVRVRKPGEGEYVPEVFYSYKNEYGLQVKMPAKPTFPVEYLYVNITHGFPLAPSPLFLSNAFPTENRPGLHDQSMQVVITQLAAILKTSDAEIGDAGTWPGRIKKDVEKWLSDWHLVTFLCMQGLFSLKEQQILCRAATAHAHPNDTHALEELFASGGWQTLLTIVDSEASANARSNPPPTSSFNNLGIDSPAFAGPSTESSAPPSGPDSVGAGAGAGAGGGRERVCPHCTFVNEHGGSDCEICGLPLDG</sequence>
<keyword id="KW-0963">Cytoplasm</keyword>
<keyword id="KW-0256">Endoplasmic reticulum</keyword>
<keyword id="KW-0472">Membrane</keyword>
<keyword id="KW-0509">mRNA transport</keyword>
<keyword id="KW-0539">Nucleus</keyword>
<keyword id="KW-0653">Protein transport</keyword>
<keyword id="KW-1185">Reference proteome</keyword>
<keyword id="KW-0811">Translocation</keyword>
<keyword id="KW-0813">Transport</keyword>
<gene>
    <name type="primary">NPL4</name>
    <name type="ordered locus">CNC02370</name>
</gene>
<protein>
    <recommendedName>
        <fullName>Nuclear protein localization protein 4</fullName>
    </recommendedName>
</protein>
<comment type="function">
    <text evidence="1">Involved in the import of nuclear-targeted proteins into the nucleus and the export of poly(A) RNA out of the nucleus. Has a role in the endoplasmic reticulum-associated degradation (ERAD) pathway (By similarity).</text>
</comment>
<comment type="subcellular location">
    <subcellularLocation>
        <location evidence="1">Cytoplasm</location>
        <location evidence="1">Perinuclear region</location>
    </subcellularLocation>
    <subcellularLocation>
        <location evidence="1">Endoplasmic reticulum membrane</location>
        <topology evidence="1">Peripheral membrane protein</topology>
        <orientation evidence="1">Cytoplasmic side</orientation>
    </subcellularLocation>
    <subcellularLocation>
        <location evidence="1">Nucleus membrane</location>
        <topology evidence="1">Peripheral membrane protein</topology>
        <orientation evidence="1">Cytoplasmic side</orientation>
    </subcellularLocation>
    <text evidence="1">Localizes mainly at the nuclear periphery and the endoplasmic reticulum membrane.</text>
</comment>
<comment type="similarity">
    <text evidence="4">Belongs to the NPL4 family.</text>
</comment>
<proteinExistence type="inferred from homology"/>